<protein>
    <recommendedName>
        <fullName evidence="6 13">Polypeptide N-acetylgalactosaminyltransferase</fullName>
        <ecNumber evidence="7 8 9">2.4.1.41</ecNumber>
    </recommendedName>
    <alternativeName>
        <fullName evidence="13">Polypeptide GalNAc transferase</fullName>
        <shortName evidence="13">GalNAc-T</shortName>
        <shortName evidence="13">pp-GaNTase</shortName>
        <shortName evidence="10 11 12">ppGalNAcT</shortName>
    </alternativeName>
    <alternativeName>
        <fullName evidence="6 13">Protein-UDP acetylgalactosaminyltransferase</fullName>
    </alternativeName>
    <alternativeName>
        <fullName evidence="13">UDP-GalNAc:polypeptide N-acetylgalactosaminyltransferase</fullName>
    </alternativeName>
    <alternativeName>
        <fullName evidence="10 11 12">UDP-N-acetyl-alpha-D-galactosamine:polypeptide N-acetylgalactosaminyltransferase</fullName>
    </alternativeName>
    <alternativeName>
        <fullName evidence="14">UDP-N-acetyl-galactosamine:polypeptide N-acetylgalactosaminyltransferase</fullName>
    </alternativeName>
</protein>
<keyword id="KW-1015">Disulfide bond</keyword>
<keyword id="KW-0325">Glycoprotein</keyword>
<keyword id="KW-0328">Glycosyltransferase</keyword>
<keyword id="KW-0333">Golgi apparatus</keyword>
<keyword id="KW-0430">Lectin</keyword>
<keyword id="KW-0464">Manganese</keyword>
<keyword id="KW-0472">Membrane</keyword>
<keyword id="KW-0479">Metal-binding</keyword>
<keyword id="KW-1185">Reference proteome</keyword>
<keyword id="KW-0735">Signal-anchor</keyword>
<keyword id="KW-0808">Transferase</keyword>
<keyword id="KW-0812">Transmembrane</keyword>
<keyword id="KW-1133">Transmembrane helix</keyword>
<comment type="function">
    <text evidence="7 8 9">Catalyzes the initial reaction in O-linked oligosaccharide biosynthesis, the transfer of an N-acetyl-D-galactosamine residue to a serine or threonine residue on the protein receptor (PubMed:23877648, PubMed:25338825, PubMed:31396754). Has a broad substrate specificity. Acceptor peptides include Muc2, Muc5Ac, Muc1a and Muc1a', with Muc2 as the best acceptor. Acts on non-glycosylated and mono- or multi-glycosylated peptide substrates (PubMed:23877648, PubMed:25338825). Transfers preferably to threonine rather than serine residue. Thr-15 is the most preferred site of glycosylation in Muc2 peptide PTTTPITTTTTVTPTPTPTGTQTK having proline residues at position -1, and at positions +1 and +3, where the number represents the distance from the C-terminal and N-terminal hydroxyl amino acid, respectively. Transfer of the N-acetyl-D-galactosamine (GalNAc) is optimal with proline residues at positions -3, -1, +1 and +3, but other amino acids are tolerated, although some, such as phenylalanine, isoleucine or leucine at -1, or lysine at +3 prevent the transfer completely. Second GalNAc is transferred to Muc2 Thr-2 or Thr-13, both of which have two proline residues nearby. Up to nine sites can be glycosylated within Muc2, but eight are used simultaneously since Thr-19 and Thr-21 are not detected to be glycosylated at the same time. Glycosylation is not detected of a potential site, which is next to an already glycosylated site, but only one amino acid is needed in between two glycosylation sites. Ser-5 is the preferred glycosylation site in Muc5Ac peptide GTTPSPVPTTSTTSAP into which up to four GalNAcs can be attached. Only the threonine residues are detected as pontential glycosylation sites in Muc1a APPAHGVTSAPDTRPAPGC and Muc1a' AHGVTSAPDTR peptides. Transferase activity is restricted to UDP-GalNAc as a donor, and none of the nucleotide sugars UDP-Gal, UDP-GlcNAc, GDP-fucose, UDP-xylose, UDP-glucuronic acid or CMP-neuraminic acid are utilized as donors (PubMed:25338825).</text>
</comment>
<comment type="catalytic activity">
    <reaction evidence="7 8">
        <text>L-seryl-[protein] + UDP-N-acetyl-alpha-D-galactosamine = a 3-O-[N-acetyl-alpha-D-galactosaminyl]-L-seryl-[protein] + UDP + H(+)</text>
        <dbReference type="Rhea" id="RHEA:23956"/>
        <dbReference type="Rhea" id="RHEA-COMP:9863"/>
        <dbReference type="Rhea" id="RHEA-COMP:12788"/>
        <dbReference type="ChEBI" id="CHEBI:15378"/>
        <dbReference type="ChEBI" id="CHEBI:29999"/>
        <dbReference type="ChEBI" id="CHEBI:53604"/>
        <dbReference type="ChEBI" id="CHEBI:58223"/>
        <dbReference type="ChEBI" id="CHEBI:67138"/>
        <dbReference type="EC" id="2.4.1.41"/>
    </reaction>
</comment>
<comment type="catalytic activity">
    <reaction evidence="7 8 9">
        <text>L-threonyl-[protein] + UDP-N-acetyl-alpha-D-galactosamine = a 3-O-[N-acetyl-alpha-D-galactosaminyl]-L-threonyl-[protein] + UDP + H(+)</text>
        <dbReference type="Rhea" id="RHEA:52424"/>
        <dbReference type="Rhea" id="RHEA-COMP:11060"/>
        <dbReference type="Rhea" id="RHEA-COMP:11689"/>
        <dbReference type="ChEBI" id="CHEBI:15378"/>
        <dbReference type="ChEBI" id="CHEBI:30013"/>
        <dbReference type="ChEBI" id="CHEBI:58223"/>
        <dbReference type="ChEBI" id="CHEBI:67138"/>
        <dbReference type="ChEBI" id="CHEBI:87075"/>
        <dbReference type="EC" id="2.4.1.41"/>
    </reaction>
</comment>
<comment type="cofactor">
    <cofactor evidence="6 7">
        <name>Mn(2+)</name>
        <dbReference type="ChEBI" id="CHEBI:29035"/>
    </cofactor>
</comment>
<comment type="activity regulation">
    <text evidence="7 9">No change in activity by addition of up to 10% methanol or glycerol, or 5% acetonitrile. 40% reduction in activity by 10% acetonitrile or by lyophilization. Activity requires divalent cations, the best being Mn(2+) (10-20 mM), followed by Co(2+), Mg(2+) and Ca(2+). Loss of activity with Cu(2+) or in the presence of EDTA (PubMed:23877648). Inhibited by UDP, but not by UMP, UTP, ADP or GDP nucleotides. No inhibition by galactose, N-acetylglucosamine or N-acetylgalactosamine sugars (PubMed:31396754).</text>
</comment>
<comment type="biophysicochemical properties">
    <kinetics>
        <KM evidence="7">0.064 mM for Muc2 acceptor peptide (at pH 7 and 37 degrees Celsius)</KM>
        <KM evidence="7">0.046 mM for UDP-N-acetyl-alpha-D-galactosamine (UDP-GalNAc) (at pH 7 and 37 degrees Celsius)</KM>
        <Vmax evidence="7">0.16 nmol/min/ug enzyme with Muc2 as acceptor peptide substrate</Vmax>
        <Vmax evidence="7">0.054 nmol/min/ug enzyme with UDP-N-acetyl-alpha-D-galactosamine (UDP-GalNAc) as donor substrate</Vmax>
    </kinetics>
    <phDependence>
        <text evidence="7">Optimum pH is 6.0-6.5.</text>
    </phDependence>
    <temperatureDependence>
        <text evidence="7">No change in activity by storage for 72 hours in a range from -20 degrees Celsius to room temperature. Dramatic reduction in activity by storing above room temperature. Less than 10% of activity after 72 hours at 37 degrees Celsius.</text>
    </temperatureDependence>
</comment>
<comment type="pathway">
    <text evidence="6 7 8 9">Protein modification; protein glycosylation.</text>
</comment>
<comment type="subcellular location">
    <subcellularLocation>
        <location evidence="6 13">Golgi apparatus membrane</location>
        <topology evidence="6 13">Single-pass type II membrane protein</topology>
    </subcellularLocation>
</comment>
<comment type="domain">
    <text evidence="1">There are two conserved domains in the glycosyltransferase region: the N-terminal domain (domain A, also called GT1 motif), which is probably involved in manganese coordination and substrate binding and the C-terminal domain (domain B, also called Gal/GalNAc-T motif), which is probably involved in catalytic reaction and UDP-Gal binding.</text>
</comment>
<comment type="domain">
    <text evidence="3">The ricin B-type lectin domain binds to GalNAc and contributes to the glycopeptide specificity.</text>
</comment>
<comment type="PTM">
    <text evidence="7">O-glycosylated.</text>
</comment>
<comment type="similarity">
    <text evidence="6">Belongs to the glycosyltransferase 2 family. GalNAc-T subfamily.</text>
</comment>
<proteinExistence type="evidence at protein level"/>
<name>GALT_BIOGL</name>
<reference evidence="14" key="1">
    <citation type="journal article" date="2013" name="Glycoconj. J.">
        <title>Expression and characterization of the first snail-derived UDP-N-acetyl-?-D-galactosamine:polypeptide N-acetylgalactosaminyltransferase.</title>
        <authorList>
            <person name="Taus C."/>
            <person name="Lucini C."/>
            <person name="Sato T."/>
            <person name="Furukawa K."/>
            <person name="Grabherr R."/>
            <person name="Staudacher E."/>
        </authorList>
    </citation>
    <scope>NUCLEOTIDE SEQUENCE [MRNA]</scope>
    <scope>FUNCTION</scope>
    <scope>CATALYTIC ACTIVITY</scope>
    <scope>SUBSTRATE SPECIFICITY</scope>
    <scope>COFACTOR</scope>
    <scope>ACTIVITY REGULATION</scope>
    <scope>BIOPHYSICOCHEMICAL PROPERTIES</scope>
    <scope>PATHWAY</scope>
    <scope>PTM</scope>
    <source>
        <tissue evidence="10">Embryo</tissue>
    </source>
</reference>
<reference key="2">
    <citation type="journal article" date="2014" name="Glycoconj. J.">
        <title>UDP-N-acetyl-alpha-D- galactosamine:polypeptide N-acetylgalactosaminyl-transferase from the snail Biomphalaria glabrata - substrate specificity and preference of glycosylation sites.</title>
        <authorList>
            <person name="Taus C."/>
            <person name="Windwarder M."/>
            <person name="Altmann F."/>
            <person name="Grabherr R."/>
            <person name="Staudacher E."/>
        </authorList>
    </citation>
    <scope>FUNCTION</scope>
    <scope>CATALYTIC ACTIVITY</scope>
    <scope>SUBSTRATE SPECIFICITY</scope>
    <scope>PATHWAY</scope>
    <scope>MUTAGENESIS OF 477-SER--ARG-600</scope>
</reference>
<reference key="3">
    <citation type="journal article" date="2020" name="Glycoconj. J.">
        <title>UDP-N-acetyl-alpha-D-galactosamine:polypeptide N-acetylgalactosaminyltransferase from the snail Biomphalaria glabrata - structural reflections.</title>
        <authorList>
            <person name="Turupcu A."/>
            <person name="Poliak P."/>
            <person name="Margreitter C."/>
            <person name="Oostenbrink C."/>
            <person name="Staudacher E."/>
        </authorList>
    </citation>
    <scope>FUNCTION</scope>
    <scope>CATALYTIC ACTIVITY</scope>
    <scope>ACTIVITY REGULATION</scope>
    <scope>PATHWAY</scope>
    <scope>MUTAGENESIS OF 477-SER--ARG-600</scope>
    <scope>3D-STRUCTURE MODELING IN COMPLEX WITH UDP AND SUBSTRATE PEPTIDES</scope>
</reference>
<sequence>MVRRKLRLLVILAGIWLVGIVVYLFKGDDQSEFEKRVIDKGPDGFYVHKEEKEHQPFQEENKAEVLHQVEDQWKKKQDAEITQSRQTFIETKKLLPPDDELGDIPWGQFDELGYISKTTLKPGQDPYARNKFNLQASDNIKSNRHVPDTRHMNCRSETWSQDLPDTSVIITFHNEARSALLRTIVSIFRKSPDHLIREIILVDDFSDDPSDGQELDKIKKVKVLRNDKRQGLIRSRVNGANMAKGKVLTFLDSHCECNEKWLEPLLDRVKQDRRNVVSPIIDVISMDNFDYIGASADLKGGFDWNLVFKWDYMSAEERNRQRQNPTAPIRTPMIAGGLFSIDKSWFDELGQYDLKMDVWGGENLEISFRVWQCHGNLEIIPCSRVGHVFRKQHPYTFPGGSGQIFARNTKRAAEVWMDEYIQFYFAAVPSAKHVDVGDISERLALRDRLQCKPFKWFLENVYPELKIPSVQDIAFGSIKQGNDCMDTMGHFADGILGLYPCHNSGGNQEFSLTKAGEVKHLDLCVTLVDTRPGNEVKLYQCTPGNYKQQFVQNPAKDQLRHKSYDLCLDSVVWQTKGIVANKCDPSSYTQKWTFSLSKNR</sequence>
<dbReference type="EC" id="2.4.1.41" evidence="7 8 9"/>
<dbReference type="EMBL" id="KC182513">
    <property type="protein sequence ID" value="AGS17229.1"/>
    <property type="molecule type" value="mRNA"/>
</dbReference>
<dbReference type="RefSeq" id="NP_001298210.1">
    <property type="nucleotide sequence ID" value="NM_001311281.1"/>
</dbReference>
<dbReference type="SMR" id="S5S833"/>
<dbReference type="GeneID" id="106058096"/>
<dbReference type="VEuPathDB" id="VectorBase:BGLAX_041270"/>
<dbReference type="VEuPathDB" id="VectorBase:BGLB030435"/>
<dbReference type="OMA" id="QEWAFSK"/>
<dbReference type="OrthoDB" id="429263at2759"/>
<dbReference type="UniPathway" id="UPA00378"/>
<dbReference type="Proteomes" id="UP000076420">
    <property type="component" value="Unplaced"/>
</dbReference>
<dbReference type="Proteomes" id="UP001165740">
    <property type="component" value="Chromosome 3"/>
</dbReference>
<dbReference type="GO" id="GO:0005794">
    <property type="term" value="C:Golgi apparatus"/>
    <property type="evidence" value="ECO:0000250"/>
    <property type="project" value="UniProtKB"/>
</dbReference>
<dbReference type="GO" id="GO:0000139">
    <property type="term" value="C:Golgi membrane"/>
    <property type="evidence" value="ECO:0007669"/>
    <property type="project" value="UniProtKB-SubCell"/>
</dbReference>
<dbReference type="GO" id="GO:0030246">
    <property type="term" value="F:carbohydrate binding"/>
    <property type="evidence" value="ECO:0007669"/>
    <property type="project" value="UniProtKB-KW"/>
</dbReference>
<dbReference type="GO" id="GO:0030145">
    <property type="term" value="F:manganese ion binding"/>
    <property type="evidence" value="ECO:0000250"/>
    <property type="project" value="UniProtKB"/>
</dbReference>
<dbReference type="GO" id="GO:0004653">
    <property type="term" value="F:polypeptide N-acetylgalactosaminyltransferase activity"/>
    <property type="evidence" value="ECO:0000314"/>
    <property type="project" value="UniProtKB"/>
</dbReference>
<dbReference type="GO" id="GO:0016266">
    <property type="term" value="P:O-glycan processing"/>
    <property type="evidence" value="ECO:0000314"/>
    <property type="project" value="UniProtKB"/>
</dbReference>
<dbReference type="GO" id="GO:0018242">
    <property type="term" value="P:protein O-linked glycosylation via serine"/>
    <property type="evidence" value="ECO:0000314"/>
    <property type="project" value="UniProtKB"/>
</dbReference>
<dbReference type="GO" id="GO:0018243">
    <property type="term" value="P:protein O-linked glycosylation via threonine"/>
    <property type="evidence" value="ECO:0000314"/>
    <property type="project" value="UniProtKB"/>
</dbReference>
<dbReference type="CDD" id="cd23434">
    <property type="entry name" value="beta-trefoil_Ricin_GALNT2"/>
    <property type="match status" value="1"/>
</dbReference>
<dbReference type="CDD" id="cd02510">
    <property type="entry name" value="pp-GalNAc-T"/>
    <property type="match status" value="1"/>
</dbReference>
<dbReference type="FunFam" id="3.90.550.10:FF:000020">
    <property type="entry name" value="Polypeptide N-acetylgalactosaminyltransferase"/>
    <property type="match status" value="1"/>
</dbReference>
<dbReference type="Gene3D" id="2.80.10.50">
    <property type="match status" value="1"/>
</dbReference>
<dbReference type="Gene3D" id="3.90.550.10">
    <property type="entry name" value="Spore Coat Polysaccharide Biosynthesis Protein SpsA, Chain A"/>
    <property type="match status" value="1"/>
</dbReference>
<dbReference type="InterPro" id="IPR045885">
    <property type="entry name" value="GalNAc-T"/>
</dbReference>
<dbReference type="InterPro" id="IPR001173">
    <property type="entry name" value="Glyco_trans_2-like"/>
</dbReference>
<dbReference type="InterPro" id="IPR029044">
    <property type="entry name" value="Nucleotide-diphossugar_trans"/>
</dbReference>
<dbReference type="InterPro" id="IPR035992">
    <property type="entry name" value="Ricin_B-like_lectins"/>
</dbReference>
<dbReference type="InterPro" id="IPR000772">
    <property type="entry name" value="Ricin_B_lectin"/>
</dbReference>
<dbReference type="PANTHER" id="PTHR11675">
    <property type="entry name" value="N-ACETYLGALACTOSAMINYLTRANSFERASE"/>
    <property type="match status" value="1"/>
</dbReference>
<dbReference type="PANTHER" id="PTHR11675:SF119">
    <property type="entry name" value="POLYPEPTIDE N-ACETYLGALACTOSAMINYLTRANSFERASE 2"/>
    <property type="match status" value="1"/>
</dbReference>
<dbReference type="Pfam" id="PF00535">
    <property type="entry name" value="Glycos_transf_2"/>
    <property type="match status" value="1"/>
</dbReference>
<dbReference type="Pfam" id="PF00652">
    <property type="entry name" value="Ricin_B_lectin"/>
    <property type="match status" value="1"/>
</dbReference>
<dbReference type="SMART" id="SM00458">
    <property type="entry name" value="RICIN"/>
    <property type="match status" value="1"/>
</dbReference>
<dbReference type="SUPFAM" id="SSF53448">
    <property type="entry name" value="Nucleotide-diphospho-sugar transferases"/>
    <property type="match status" value="1"/>
</dbReference>
<dbReference type="SUPFAM" id="SSF50370">
    <property type="entry name" value="Ricin B-like lectins"/>
    <property type="match status" value="1"/>
</dbReference>
<dbReference type="PROSITE" id="PS50231">
    <property type="entry name" value="RICIN_B_LECTIN"/>
    <property type="match status" value="1"/>
</dbReference>
<organism evidence="14">
    <name type="scientific">Biomphalaria glabrata</name>
    <name type="common">Bloodfluke planorb</name>
    <name type="synonym">Freshwater snail</name>
    <dbReference type="NCBI Taxonomy" id="6526"/>
    <lineage>
        <taxon>Eukaryota</taxon>
        <taxon>Metazoa</taxon>
        <taxon>Spiralia</taxon>
        <taxon>Lophotrochozoa</taxon>
        <taxon>Mollusca</taxon>
        <taxon>Gastropoda</taxon>
        <taxon>Heterobranchia</taxon>
        <taxon>Euthyneura</taxon>
        <taxon>Panpulmonata</taxon>
        <taxon>Hygrophila</taxon>
        <taxon>Lymnaeoidea</taxon>
        <taxon>Planorbidae</taxon>
        <taxon>Biomphalaria</taxon>
    </lineage>
</organism>
<accession>S5S833</accession>
<evidence type="ECO:0000250" key="1">
    <source>
        <dbReference type="UniProtKB" id="O08912"/>
    </source>
</evidence>
<evidence type="ECO:0000250" key="2">
    <source>
        <dbReference type="UniProtKB" id="Q10471"/>
    </source>
</evidence>
<evidence type="ECO:0000250" key="3">
    <source>
        <dbReference type="UniProtKB" id="Q8N4A0"/>
    </source>
</evidence>
<evidence type="ECO:0000255" key="4"/>
<evidence type="ECO:0000255" key="5">
    <source>
        <dbReference type="PROSITE-ProRule" id="PRU00174"/>
    </source>
</evidence>
<evidence type="ECO:0000255" key="6">
    <source>
        <dbReference type="RuleBase" id="RU361242"/>
    </source>
</evidence>
<evidence type="ECO:0000269" key="7">
    <source>
    </source>
</evidence>
<evidence type="ECO:0000269" key="8">
    <source>
    </source>
</evidence>
<evidence type="ECO:0000269" key="9">
    <source>
    </source>
</evidence>
<evidence type="ECO:0000303" key="10">
    <source>
    </source>
</evidence>
<evidence type="ECO:0000303" key="11">
    <source>
    </source>
</evidence>
<evidence type="ECO:0000303" key="12">
    <source>
    </source>
</evidence>
<evidence type="ECO:0000305" key="13"/>
<evidence type="ECO:0000312" key="14">
    <source>
        <dbReference type="EMBL" id="AGS17229.1"/>
    </source>
</evidence>
<feature type="chain" id="PRO_0000458661" description="Polypeptide N-acetylgalactosaminyltransferase">
    <location>
        <begin position="1"/>
        <end position="600"/>
    </location>
</feature>
<feature type="topological domain" description="Cytoplasmic" evidence="4 13">
    <location>
        <begin position="1"/>
        <end position="7"/>
    </location>
</feature>
<feature type="transmembrane region" description="Helical; Signal-anchor for type II membrane protein" evidence="4">
    <location>
        <begin position="8"/>
        <end position="28"/>
    </location>
</feature>
<feature type="topological domain" description="Lumenal" evidence="4 13">
    <location>
        <begin position="29"/>
        <end position="600"/>
    </location>
</feature>
<feature type="domain" description="Ricin B-type lectin" evidence="5">
    <location>
        <begin position="466"/>
        <end position="595"/>
    </location>
</feature>
<feature type="region of interest" description="Catalytic subdomain A" evidence="1">
    <location>
        <begin position="163"/>
        <end position="268"/>
    </location>
</feature>
<feature type="region of interest" description="Catalytic subdomain B" evidence="1">
    <location>
        <begin position="328"/>
        <end position="390"/>
    </location>
</feature>
<feature type="binding site" evidence="2">
    <location>
        <position position="171"/>
    </location>
    <ligand>
        <name>substrate</name>
    </ligand>
</feature>
<feature type="binding site" evidence="2">
    <location>
        <position position="204"/>
    </location>
    <ligand>
        <name>substrate</name>
    </ligand>
</feature>
<feature type="binding site" evidence="2">
    <location>
        <position position="229"/>
    </location>
    <ligand>
        <name>substrate</name>
    </ligand>
</feature>
<feature type="binding site" evidence="2">
    <location>
        <position position="252"/>
    </location>
    <ligand>
        <name>Mn(2+)</name>
        <dbReference type="ChEBI" id="CHEBI:29035"/>
    </ligand>
</feature>
<feature type="binding site" evidence="2">
    <location>
        <position position="253"/>
    </location>
    <ligand>
        <name>substrate</name>
    </ligand>
</feature>
<feature type="binding site" evidence="2">
    <location>
        <position position="254"/>
    </location>
    <ligand>
        <name>Mn(2+)</name>
        <dbReference type="ChEBI" id="CHEBI:29035"/>
    </ligand>
</feature>
<feature type="binding site" evidence="2">
    <location>
        <position position="359"/>
    </location>
    <ligand>
        <name>substrate</name>
    </ligand>
</feature>
<feature type="binding site" evidence="2">
    <location>
        <position position="387"/>
    </location>
    <ligand>
        <name>Mn(2+)</name>
        <dbReference type="ChEBI" id="CHEBI:29035"/>
    </ligand>
</feature>
<feature type="binding site" evidence="2">
    <location>
        <position position="390"/>
    </location>
    <ligand>
        <name>substrate</name>
    </ligand>
</feature>
<feature type="binding site" evidence="2">
    <location>
        <position position="393"/>
    </location>
    <ligand>
        <name>substrate</name>
    </ligand>
</feature>
<feature type="binding site" evidence="2">
    <location>
        <position position="395"/>
    </location>
    <ligand>
        <name>substrate</name>
    </ligand>
</feature>
<feature type="disulfide bond" evidence="2">
    <location>
        <begin position="154"/>
        <end position="382"/>
    </location>
</feature>
<feature type="disulfide bond" evidence="2">
    <location>
        <begin position="373"/>
        <end position="451"/>
    </location>
</feature>
<feature type="disulfide bond" evidence="5">
    <location>
        <begin position="484"/>
        <end position="501"/>
    </location>
</feature>
<feature type="disulfide bond" evidence="5">
    <location>
        <begin position="524"/>
        <end position="541"/>
    </location>
</feature>
<feature type="disulfide bond" evidence="5">
    <location>
        <begin position="567"/>
        <end position="583"/>
    </location>
</feature>
<feature type="mutagenesis site" description="No effect on glycosyltransferase activity for peptide acceptors with either one single glycosylation site or with multiple glycosylation sites. No effect on speed or efficiency of the N-acetyl-D-galactosamine (GalNAc) transfer. Activity is inhibited by UDP as wild-type." evidence="8 9">
    <location>
        <begin position="477"/>
        <end position="600"/>
    </location>
</feature>